<comment type="similarity">
    <text evidence="2">Belongs to the hssA/B family.</text>
</comment>
<organism>
    <name type="scientific">Dictyostelium discoideum</name>
    <name type="common">Social amoeba</name>
    <dbReference type="NCBI Taxonomy" id="44689"/>
    <lineage>
        <taxon>Eukaryota</taxon>
        <taxon>Amoebozoa</taxon>
        <taxon>Evosea</taxon>
        <taxon>Eumycetozoa</taxon>
        <taxon>Dictyostelia</taxon>
        <taxon>Dictyosteliales</taxon>
        <taxon>Dictyosteliaceae</taxon>
        <taxon>Dictyostelium</taxon>
    </lineage>
</organism>
<protein>
    <recommendedName>
        <fullName>HssA/B-like protein 42</fullName>
    </recommendedName>
</protein>
<reference key="1">
    <citation type="journal article" date="2005" name="Nature">
        <title>The genome of the social amoeba Dictyostelium discoideum.</title>
        <authorList>
            <person name="Eichinger L."/>
            <person name="Pachebat J.A."/>
            <person name="Gloeckner G."/>
            <person name="Rajandream M.A."/>
            <person name="Sucgang R."/>
            <person name="Berriman M."/>
            <person name="Song J."/>
            <person name="Olsen R."/>
            <person name="Szafranski K."/>
            <person name="Xu Q."/>
            <person name="Tunggal B."/>
            <person name="Kummerfeld S."/>
            <person name="Madera M."/>
            <person name="Konfortov B.A."/>
            <person name="Rivero F."/>
            <person name="Bankier A.T."/>
            <person name="Lehmann R."/>
            <person name="Hamlin N."/>
            <person name="Davies R."/>
            <person name="Gaudet P."/>
            <person name="Fey P."/>
            <person name="Pilcher K."/>
            <person name="Chen G."/>
            <person name="Saunders D."/>
            <person name="Sodergren E.J."/>
            <person name="Davis P."/>
            <person name="Kerhornou A."/>
            <person name="Nie X."/>
            <person name="Hall N."/>
            <person name="Anjard C."/>
            <person name="Hemphill L."/>
            <person name="Bason N."/>
            <person name="Farbrother P."/>
            <person name="Desany B."/>
            <person name="Just E."/>
            <person name="Morio T."/>
            <person name="Rost R."/>
            <person name="Churcher C.M."/>
            <person name="Cooper J."/>
            <person name="Haydock S."/>
            <person name="van Driessche N."/>
            <person name="Cronin A."/>
            <person name="Goodhead I."/>
            <person name="Muzny D.M."/>
            <person name="Mourier T."/>
            <person name="Pain A."/>
            <person name="Lu M."/>
            <person name="Harper D."/>
            <person name="Lindsay R."/>
            <person name="Hauser H."/>
            <person name="James K.D."/>
            <person name="Quiles M."/>
            <person name="Madan Babu M."/>
            <person name="Saito T."/>
            <person name="Buchrieser C."/>
            <person name="Wardroper A."/>
            <person name="Felder M."/>
            <person name="Thangavelu M."/>
            <person name="Johnson D."/>
            <person name="Knights A."/>
            <person name="Loulseged H."/>
            <person name="Mungall K.L."/>
            <person name="Oliver K."/>
            <person name="Price C."/>
            <person name="Quail M.A."/>
            <person name="Urushihara H."/>
            <person name="Hernandez J."/>
            <person name="Rabbinowitsch E."/>
            <person name="Steffen D."/>
            <person name="Sanders M."/>
            <person name="Ma J."/>
            <person name="Kohara Y."/>
            <person name="Sharp S."/>
            <person name="Simmonds M.N."/>
            <person name="Spiegler S."/>
            <person name="Tivey A."/>
            <person name="Sugano S."/>
            <person name="White B."/>
            <person name="Walker D."/>
            <person name="Woodward J.R."/>
            <person name="Winckler T."/>
            <person name="Tanaka Y."/>
            <person name="Shaulsky G."/>
            <person name="Schleicher M."/>
            <person name="Weinstock G.M."/>
            <person name="Rosenthal A."/>
            <person name="Cox E.C."/>
            <person name="Chisholm R.L."/>
            <person name="Gibbs R.A."/>
            <person name="Loomis W.F."/>
            <person name="Platzer M."/>
            <person name="Kay R.R."/>
            <person name="Williams J.G."/>
            <person name="Dear P.H."/>
            <person name="Noegel A.A."/>
            <person name="Barrell B.G."/>
            <person name="Kuspa A."/>
        </authorList>
    </citation>
    <scope>NUCLEOTIDE SEQUENCE [LARGE SCALE GENOMIC DNA]</scope>
    <source>
        <strain>AX4</strain>
    </source>
</reference>
<evidence type="ECO:0000256" key="1">
    <source>
        <dbReference type="SAM" id="MobiDB-lite"/>
    </source>
</evidence>
<evidence type="ECO:0000305" key="2"/>
<gene>
    <name type="primary">hssl42</name>
    <name type="ORF">DDB_G0280953</name>
</gene>
<sequence>MTLFSSISSMSTSMSGSKSSISSFGSGTSMGSNSIACGGCGGSGGILGSGLGLGLGLGLDLTGGSRSRGACGGNRGNGNGNGGMGGGNGSCCGGPCCGI</sequence>
<accession>Q54UM6</accession>
<keyword id="KW-1185">Reference proteome</keyword>
<dbReference type="EMBL" id="AAFI02000039">
    <property type="protein sequence ID" value="EAL67018.1"/>
    <property type="molecule type" value="Genomic_DNA"/>
</dbReference>
<dbReference type="RefSeq" id="XP_640995.1">
    <property type="nucleotide sequence ID" value="XM_635903.1"/>
</dbReference>
<dbReference type="PaxDb" id="44689-DDB0232102"/>
<dbReference type="EnsemblProtists" id="EAL67018">
    <property type="protein sequence ID" value="EAL67018"/>
    <property type="gene ID" value="DDB_G0280953"/>
</dbReference>
<dbReference type="GeneID" id="8622803"/>
<dbReference type="KEGG" id="ddi:DDB_G0280953"/>
<dbReference type="dictyBase" id="DDB_G0280953"/>
<dbReference type="HOGENOM" id="CLU_181850_0_0_1"/>
<dbReference type="InParanoid" id="Q54UM6"/>
<dbReference type="PRO" id="PR:Q54UM6"/>
<dbReference type="Proteomes" id="UP000002195">
    <property type="component" value="Chromosome 3"/>
</dbReference>
<dbReference type="GO" id="GO:0030587">
    <property type="term" value="P:sorocarp development"/>
    <property type="evidence" value="ECO:0000318"/>
    <property type="project" value="GO_Central"/>
</dbReference>
<dbReference type="InterPro" id="IPR050533">
    <property type="entry name" value="HssA/B-like_chaperone"/>
</dbReference>
<dbReference type="InterPro" id="IPR008455">
    <property type="entry name" value="HssA/B-related"/>
</dbReference>
<dbReference type="PANTHER" id="PTHR31059">
    <property type="entry name" value="HSSA/B-LIKE PROTEIN 1-RELATED-RELATED"/>
    <property type="match status" value="1"/>
</dbReference>
<dbReference type="PANTHER" id="PTHR31059:SF5">
    <property type="entry name" value="HSSA_B-LIKE PROTEIN 1-RELATED"/>
    <property type="match status" value="1"/>
</dbReference>
<dbReference type="Pfam" id="PF05710">
    <property type="entry name" value="Coiled"/>
    <property type="match status" value="1"/>
</dbReference>
<feature type="chain" id="PRO_0000330410" description="HssA/B-like protein 42">
    <location>
        <begin position="1"/>
        <end position="99"/>
    </location>
</feature>
<feature type="region of interest" description="Disordered" evidence="1">
    <location>
        <begin position="1"/>
        <end position="29"/>
    </location>
</feature>
<proteinExistence type="inferred from homology"/>
<name>HSL42_DICDI</name>